<accession>A4XXQ6</accession>
<evidence type="ECO:0000255" key="1">
    <source>
        <dbReference type="HAMAP-Rule" id="MF_00252"/>
    </source>
</evidence>
<evidence type="ECO:0000256" key="2">
    <source>
        <dbReference type="SAM" id="MobiDB-lite"/>
    </source>
</evidence>
<dbReference type="EC" id="6.1.1.6" evidence="1"/>
<dbReference type="EMBL" id="CP000680">
    <property type="protein sequence ID" value="ABP86122.1"/>
    <property type="molecule type" value="Genomic_DNA"/>
</dbReference>
<dbReference type="SMR" id="A4XXQ6"/>
<dbReference type="STRING" id="399739.Pmen_3370"/>
<dbReference type="KEGG" id="pmy:Pmen_3370"/>
<dbReference type="PATRIC" id="fig|399739.8.peg.3420"/>
<dbReference type="eggNOG" id="COG1190">
    <property type="taxonomic scope" value="Bacteria"/>
</dbReference>
<dbReference type="HOGENOM" id="CLU_008255_6_0_6"/>
<dbReference type="OrthoDB" id="9801152at2"/>
<dbReference type="GO" id="GO:0005829">
    <property type="term" value="C:cytosol"/>
    <property type="evidence" value="ECO:0007669"/>
    <property type="project" value="TreeGrafter"/>
</dbReference>
<dbReference type="GO" id="GO:0005524">
    <property type="term" value="F:ATP binding"/>
    <property type="evidence" value="ECO:0007669"/>
    <property type="project" value="UniProtKB-UniRule"/>
</dbReference>
<dbReference type="GO" id="GO:0004824">
    <property type="term" value="F:lysine-tRNA ligase activity"/>
    <property type="evidence" value="ECO:0007669"/>
    <property type="project" value="UniProtKB-UniRule"/>
</dbReference>
<dbReference type="GO" id="GO:0000287">
    <property type="term" value="F:magnesium ion binding"/>
    <property type="evidence" value="ECO:0007669"/>
    <property type="project" value="UniProtKB-UniRule"/>
</dbReference>
<dbReference type="GO" id="GO:0000049">
    <property type="term" value="F:tRNA binding"/>
    <property type="evidence" value="ECO:0007669"/>
    <property type="project" value="TreeGrafter"/>
</dbReference>
<dbReference type="GO" id="GO:0006430">
    <property type="term" value="P:lysyl-tRNA aminoacylation"/>
    <property type="evidence" value="ECO:0007669"/>
    <property type="project" value="UniProtKB-UniRule"/>
</dbReference>
<dbReference type="CDD" id="cd00775">
    <property type="entry name" value="LysRS_core"/>
    <property type="match status" value="1"/>
</dbReference>
<dbReference type="CDD" id="cd04322">
    <property type="entry name" value="LysRS_N"/>
    <property type="match status" value="1"/>
</dbReference>
<dbReference type="FunFam" id="2.40.50.140:FF:000024">
    <property type="entry name" value="Lysine--tRNA ligase"/>
    <property type="match status" value="1"/>
</dbReference>
<dbReference type="FunFam" id="3.30.930.10:FF:000001">
    <property type="entry name" value="Lysine--tRNA ligase"/>
    <property type="match status" value="1"/>
</dbReference>
<dbReference type="Gene3D" id="3.30.930.10">
    <property type="entry name" value="Bira Bifunctional Protein, Domain 2"/>
    <property type="match status" value="1"/>
</dbReference>
<dbReference type="Gene3D" id="2.40.50.140">
    <property type="entry name" value="Nucleic acid-binding proteins"/>
    <property type="match status" value="1"/>
</dbReference>
<dbReference type="HAMAP" id="MF_00252">
    <property type="entry name" value="Lys_tRNA_synth_class2"/>
    <property type="match status" value="1"/>
</dbReference>
<dbReference type="InterPro" id="IPR004364">
    <property type="entry name" value="Aa-tRNA-synt_II"/>
</dbReference>
<dbReference type="InterPro" id="IPR006195">
    <property type="entry name" value="aa-tRNA-synth_II"/>
</dbReference>
<dbReference type="InterPro" id="IPR045864">
    <property type="entry name" value="aa-tRNA-synth_II/BPL/LPL"/>
</dbReference>
<dbReference type="InterPro" id="IPR002313">
    <property type="entry name" value="Lys-tRNA-ligase_II"/>
</dbReference>
<dbReference type="InterPro" id="IPR044136">
    <property type="entry name" value="Lys-tRNA-ligase_II_N"/>
</dbReference>
<dbReference type="InterPro" id="IPR018149">
    <property type="entry name" value="Lys-tRNA-synth_II_C"/>
</dbReference>
<dbReference type="InterPro" id="IPR012340">
    <property type="entry name" value="NA-bd_OB-fold"/>
</dbReference>
<dbReference type="InterPro" id="IPR004365">
    <property type="entry name" value="NA-bd_OB_tRNA"/>
</dbReference>
<dbReference type="NCBIfam" id="TIGR00499">
    <property type="entry name" value="lysS_bact"/>
    <property type="match status" value="1"/>
</dbReference>
<dbReference type="NCBIfam" id="NF001756">
    <property type="entry name" value="PRK00484.1"/>
    <property type="match status" value="1"/>
</dbReference>
<dbReference type="PANTHER" id="PTHR42918:SF15">
    <property type="entry name" value="LYSINE--TRNA LIGASE, CHLOROPLASTIC_MITOCHONDRIAL"/>
    <property type="match status" value="1"/>
</dbReference>
<dbReference type="PANTHER" id="PTHR42918">
    <property type="entry name" value="LYSYL-TRNA SYNTHETASE"/>
    <property type="match status" value="1"/>
</dbReference>
<dbReference type="Pfam" id="PF00152">
    <property type="entry name" value="tRNA-synt_2"/>
    <property type="match status" value="1"/>
</dbReference>
<dbReference type="Pfam" id="PF01336">
    <property type="entry name" value="tRNA_anti-codon"/>
    <property type="match status" value="1"/>
</dbReference>
<dbReference type="PRINTS" id="PR00982">
    <property type="entry name" value="TRNASYNTHLYS"/>
</dbReference>
<dbReference type="SUPFAM" id="SSF55681">
    <property type="entry name" value="Class II aaRS and biotin synthetases"/>
    <property type="match status" value="1"/>
</dbReference>
<dbReference type="SUPFAM" id="SSF50249">
    <property type="entry name" value="Nucleic acid-binding proteins"/>
    <property type="match status" value="1"/>
</dbReference>
<dbReference type="PROSITE" id="PS50862">
    <property type="entry name" value="AA_TRNA_LIGASE_II"/>
    <property type="match status" value="1"/>
</dbReference>
<reference key="1">
    <citation type="submission" date="2007-04" db="EMBL/GenBank/DDBJ databases">
        <title>Complete sequence of Pseudomonas mendocina ymp.</title>
        <authorList>
            <consortium name="US DOE Joint Genome Institute"/>
            <person name="Copeland A."/>
            <person name="Lucas S."/>
            <person name="Lapidus A."/>
            <person name="Barry K."/>
            <person name="Glavina del Rio T."/>
            <person name="Dalin E."/>
            <person name="Tice H."/>
            <person name="Pitluck S."/>
            <person name="Kiss H."/>
            <person name="Brettin T."/>
            <person name="Detter J.C."/>
            <person name="Bruce D."/>
            <person name="Han C."/>
            <person name="Schmutz J."/>
            <person name="Larimer F."/>
            <person name="Land M."/>
            <person name="Hauser L."/>
            <person name="Kyrpides N."/>
            <person name="Mikhailova N."/>
            <person name="Hersman L."/>
            <person name="Dubois J."/>
            <person name="Maurice P."/>
            <person name="Richardson P."/>
        </authorList>
    </citation>
    <scope>NUCLEOTIDE SEQUENCE [LARGE SCALE GENOMIC DNA]</scope>
    <source>
        <strain>ymp</strain>
    </source>
</reference>
<proteinExistence type="inferred from homology"/>
<protein>
    <recommendedName>
        <fullName evidence="1">Lysine--tRNA ligase</fullName>
        <ecNumber evidence="1">6.1.1.6</ecNumber>
    </recommendedName>
    <alternativeName>
        <fullName evidence="1">Lysyl-tRNA synthetase</fullName>
        <shortName evidence="1">LysRS</shortName>
    </alternativeName>
</protein>
<gene>
    <name evidence="1" type="primary">lysS</name>
    <name type="ordered locus">Pmen_3370</name>
</gene>
<feature type="chain" id="PRO_1000012911" description="Lysine--tRNA ligase">
    <location>
        <begin position="1"/>
        <end position="505"/>
    </location>
</feature>
<feature type="region of interest" description="Disordered" evidence="2">
    <location>
        <begin position="1"/>
        <end position="23"/>
    </location>
</feature>
<feature type="compositionally biased region" description="Polar residues" evidence="2">
    <location>
        <begin position="1"/>
        <end position="11"/>
    </location>
</feature>
<feature type="compositionally biased region" description="Basic and acidic residues" evidence="2">
    <location>
        <begin position="12"/>
        <end position="23"/>
    </location>
</feature>
<feature type="binding site" evidence="1">
    <location>
        <position position="415"/>
    </location>
    <ligand>
        <name>Mg(2+)</name>
        <dbReference type="ChEBI" id="CHEBI:18420"/>
        <label>1</label>
    </ligand>
</feature>
<feature type="binding site" evidence="1">
    <location>
        <position position="422"/>
    </location>
    <ligand>
        <name>Mg(2+)</name>
        <dbReference type="ChEBI" id="CHEBI:18420"/>
        <label>1</label>
    </ligand>
</feature>
<feature type="binding site" evidence="1">
    <location>
        <position position="422"/>
    </location>
    <ligand>
        <name>Mg(2+)</name>
        <dbReference type="ChEBI" id="CHEBI:18420"/>
        <label>2</label>
    </ligand>
</feature>
<sequence length="505" mass="57493">MSDQQLDQPSLSHEERQHEENKLIAQRKEKLAAVREQGIAFPNDFRRDSLCGELQKQYEGKSKEELEAAAIPVKIAGRIMLNRGAFMVLQDTSGRLQVYVDRKGLPAETLEAIKTWDLGDIIAAEGTLARSGKGDLYVNMTSVRLLTKSLRPLPDKHHGLTDTEQRYRQRYVDLIVNEETRHTFRVRSQVIAHIRRFLNERGFLEVETPMLQTIPGGAAAKPFETHHNALDMQMFLRIAPELYLKRLVVGGFEKVFEINRNFRNEGVSTRHNPEFTMLEFYQAYADYRDNMDLTEELFRELALAVLGTTDVPYGDKVFHFGEPFVRLSVYDSILKYNPDITEADLNDVDKARAIAKKAGAKVLGHEGLGKLQVMIFEELVESKLEQPHFITEYPFEVSPLARRNDQNPAVTDRFELFIGGREIANAYSELNDAEDQAERFHAQVAEKDAGDDEAMHFDADFVRALEYGMPPTAGEGIGIDRLVMLLTNSPSIRDVILFPHMRPQA</sequence>
<organism>
    <name type="scientific">Ectopseudomonas mendocina (strain ymp)</name>
    <name type="common">Pseudomonas mendocina</name>
    <dbReference type="NCBI Taxonomy" id="399739"/>
    <lineage>
        <taxon>Bacteria</taxon>
        <taxon>Pseudomonadati</taxon>
        <taxon>Pseudomonadota</taxon>
        <taxon>Gammaproteobacteria</taxon>
        <taxon>Pseudomonadales</taxon>
        <taxon>Pseudomonadaceae</taxon>
        <taxon>Ectopseudomonas</taxon>
    </lineage>
</organism>
<name>SYK_ECTM1</name>
<keyword id="KW-0030">Aminoacyl-tRNA synthetase</keyword>
<keyword id="KW-0067">ATP-binding</keyword>
<keyword id="KW-0963">Cytoplasm</keyword>
<keyword id="KW-0436">Ligase</keyword>
<keyword id="KW-0460">Magnesium</keyword>
<keyword id="KW-0479">Metal-binding</keyword>
<keyword id="KW-0547">Nucleotide-binding</keyword>
<keyword id="KW-0648">Protein biosynthesis</keyword>
<comment type="catalytic activity">
    <reaction evidence="1">
        <text>tRNA(Lys) + L-lysine + ATP = L-lysyl-tRNA(Lys) + AMP + diphosphate</text>
        <dbReference type="Rhea" id="RHEA:20792"/>
        <dbReference type="Rhea" id="RHEA-COMP:9696"/>
        <dbReference type="Rhea" id="RHEA-COMP:9697"/>
        <dbReference type="ChEBI" id="CHEBI:30616"/>
        <dbReference type="ChEBI" id="CHEBI:32551"/>
        <dbReference type="ChEBI" id="CHEBI:33019"/>
        <dbReference type="ChEBI" id="CHEBI:78442"/>
        <dbReference type="ChEBI" id="CHEBI:78529"/>
        <dbReference type="ChEBI" id="CHEBI:456215"/>
        <dbReference type="EC" id="6.1.1.6"/>
    </reaction>
</comment>
<comment type="cofactor">
    <cofactor evidence="1">
        <name>Mg(2+)</name>
        <dbReference type="ChEBI" id="CHEBI:18420"/>
    </cofactor>
    <text evidence="1">Binds 3 Mg(2+) ions per subunit.</text>
</comment>
<comment type="subunit">
    <text evidence="1">Homodimer.</text>
</comment>
<comment type="subcellular location">
    <subcellularLocation>
        <location evidence="1">Cytoplasm</location>
    </subcellularLocation>
</comment>
<comment type="similarity">
    <text evidence="1">Belongs to the class-II aminoacyl-tRNA synthetase family.</text>
</comment>